<accession>Q5UQF9</accession>
<evidence type="ECO:0000255" key="1"/>
<evidence type="ECO:0000305" key="2"/>
<comment type="subcellular location">
    <subcellularLocation>
        <location evidence="2">Membrane</location>
        <topology evidence="2">Single-pass membrane protein</topology>
    </subcellularLocation>
</comment>
<organism>
    <name type="scientific">Acanthamoeba polyphaga mimivirus</name>
    <name type="common">APMV</name>
    <dbReference type="NCBI Taxonomy" id="212035"/>
    <lineage>
        <taxon>Viruses</taxon>
        <taxon>Varidnaviria</taxon>
        <taxon>Bamfordvirae</taxon>
        <taxon>Nucleocytoviricota</taxon>
        <taxon>Megaviricetes</taxon>
        <taxon>Imitervirales</taxon>
        <taxon>Mimiviridae</taxon>
        <taxon>Megamimivirinae</taxon>
        <taxon>Mimivirus</taxon>
        <taxon>Mimivirus bradfordmassiliense</taxon>
    </lineage>
</organism>
<sequence>MIKPIYLIIIGTVICLVILYYFYHEISDSKKLLTSTYQKNMLLESKIFELERKSNVFIEKYDNLKNVRGQKNSSKIDSPVLSITYHSDMVKNGNLSVKYDEMGNTEVNELLQKINKNRDPKQLSNIHQPIPTKTSHNLVSKLEQDVGYKIPGTSSLLQNNCAQNIQKNTLHIDYPESINIPQNIKPNNIVVDNEFMMDENDEFNNPSKNLETEGDIFEVDMNNIFKNNKIKLLNNTDKKLSYSDSELMFGNDYQDILNSLPNDISDISANSLSSFDETVIKSISENLKNNIVSDSLSASIDVRKKVEDKITRVKNKSKISSKSRNSVVKK</sequence>
<protein>
    <recommendedName>
        <fullName>Uncharacterized protein L487</fullName>
    </recommendedName>
</protein>
<dbReference type="EMBL" id="AY653733">
    <property type="protein sequence ID" value="AAV50753.1"/>
    <property type="molecule type" value="Genomic_DNA"/>
</dbReference>
<dbReference type="SMR" id="Q5UQF9"/>
<dbReference type="KEGG" id="vg:9925115"/>
<dbReference type="Proteomes" id="UP000001134">
    <property type="component" value="Genome"/>
</dbReference>
<dbReference type="GO" id="GO:0016020">
    <property type="term" value="C:membrane"/>
    <property type="evidence" value="ECO:0007669"/>
    <property type="project" value="UniProtKB-SubCell"/>
</dbReference>
<reference key="1">
    <citation type="journal article" date="2004" name="Science">
        <title>The 1.2-megabase genome sequence of Mimivirus.</title>
        <authorList>
            <person name="Raoult D."/>
            <person name="Audic S."/>
            <person name="Robert C."/>
            <person name="Abergel C."/>
            <person name="Renesto P."/>
            <person name="Ogata H."/>
            <person name="La Scola B."/>
            <person name="Susan M."/>
            <person name="Claverie J.-M."/>
        </authorList>
    </citation>
    <scope>NUCLEOTIDE SEQUENCE [LARGE SCALE GENOMIC DNA]</scope>
    <source>
        <strain>Rowbotham-Bradford</strain>
    </source>
</reference>
<name>YL487_MIMIV</name>
<organismHost>
    <name type="scientific">Acanthamoeba polyphaga</name>
    <name type="common">Amoeba</name>
    <dbReference type="NCBI Taxonomy" id="5757"/>
</organismHost>
<proteinExistence type="predicted"/>
<keyword id="KW-0325">Glycoprotein</keyword>
<keyword id="KW-0472">Membrane</keyword>
<keyword id="KW-1185">Reference proteome</keyword>
<keyword id="KW-0812">Transmembrane</keyword>
<keyword id="KW-1133">Transmembrane helix</keyword>
<gene>
    <name type="ordered locus">MIMI_L487</name>
</gene>
<feature type="chain" id="PRO_0000253210" description="Uncharacterized protein L487">
    <location>
        <begin position="1"/>
        <end position="330"/>
    </location>
</feature>
<feature type="transmembrane region" description="Helical" evidence="1">
    <location>
        <begin position="2"/>
        <end position="22"/>
    </location>
</feature>
<feature type="glycosylation site" description="N-linked (GlcNAc...) asparagine; by host" evidence="1">
    <location>
        <position position="72"/>
    </location>
</feature>
<feature type="glycosylation site" description="N-linked (GlcNAc...) asparagine; by host" evidence="1">
    <location>
        <position position="94"/>
    </location>
</feature>
<feature type="glycosylation site" description="N-linked (GlcNAc...) asparagine; by host" evidence="1">
    <location>
        <position position="234"/>
    </location>
</feature>
<feature type="glycosylation site" description="N-linked (GlcNAc...) asparagine; by host" evidence="1">
    <location>
        <position position="315"/>
    </location>
</feature>